<gene>
    <name evidence="1" type="primary">gcvT</name>
    <name type="ordered locus">Clos_0065</name>
</gene>
<feature type="chain" id="PRO_1000059078" description="Aminomethyltransferase">
    <location>
        <begin position="1"/>
        <end position="368"/>
    </location>
</feature>
<evidence type="ECO:0000255" key="1">
    <source>
        <dbReference type="HAMAP-Rule" id="MF_00259"/>
    </source>
</evidence>
<comment type="function">
    <text evidence="1">The glycine cleavage system catalyzes the degradation of glycine.</text>
</comment>
<comment type="catalytic activity">
    <reaction evidence="1">
        <text>N(6)-[(R)-S(8)-aminomethyldihydrolipoyl]-L-lysyl-[protein] + (6S)-5,6,7,8-tetrahydrofolate = N(6)-[(R)-dihydrolipoyl]-L-lysyl-[protein] + (6R)-5,10-methylene-5,6,7,8-tetrahydrofolate + NH4(+)</text>
        <dbReference type="Rhea" id="RHEA:16945"/>
        <dbReference type="Rhea" id="RHEA-COMP:10475"/>
        <dbReference type="Rhea" id="RHEA-COMP:10492"/>
        <dbReference type="ChEBI" id="CHEBI:15636"/>
        <dbReference type="ChEBI" id="CHEBI:28938"/>
        <dbReference type="ChEBI" id="CHEBI:57453"/>
        <dbReference type="ChEBI" id="CHEBI:83100"/>
        <dbReference type="ChEBI" id="CHEBI:83143"/>
        <dbReference type="EC" id="2.1.2.10"/>
    </reaction>
</comment>
<comment type="subunit">
    <text evidence="1">The glycine cleavage system is composed of four proteins: P, T, L and H.</text>
</comment>
<comment type="similarity">
    <text evidence="1">Belongs to the GcvT family.</text>
</comment>
<accession>A8MEG4</accession>
<name>GCST_ALKOO</name>
<organism>
    <name type="scientific">Alkaliphilus oremlandii (strain OhILAs)</name>
    <name type="common">Clostridium oremlandii (strain OhILAs)</name>
    <dbReference type="NCBI Taxonomy" id="350688"/>
    <lineage>
        <taxon>Bacteria</taxon>
        <taxon>Bacillati</taxon>
        <taxon>Bacillota</taxon>
        <taxon>Clostridia</taxon>
        <taxon>Peptostreptococcales</taxon>
        <taxon>Natronincolaceae</taxon>
        <taxon>Alkaliphilus</taxon>
    </lineage>
</organism>
<sequence length="368" mass="41165">MTELKRTPLFDAHNRYGGKLVDFAGWEMSVQFEGLTAEHEAVRNAAGIFDVSHMGEIEVRGKDAEAFVQYLVTNDVAALEDNQIVYTFMCYPDGGIVDDLLVYKFNKEYYYLVVNASNSDKDFAWMNENKGAYDVEIINISDSVSQVAVQGPKAEEIVQELTDTDLSEIPFFYFKNDVVINGANCLISRTGYTGEDGFEIYVDNDKVDALWDKIIEVGKDRGLKPAGLGARDTLRFEATLPLYGHEIDKDISPLEAGLGFFVKLNKENFIGKDALVRQKEEGLKRKVVGFEMKENGIPRQGYEVKVGDKVIGVVTTGYNSPTLKKNIGYALIDAEYAALGTPIDIQVRKKTLKAEVVSKKFYTRSTKK</sequence>
<dbReference type="EC" id="2.1.2.10" evidence="1"/>
<dbReference type="EMBL" id="CP000853">
    <property type="protein sequence ID" value="ABW17635.1"/>
    <property type="molecule type" value="Genomic_DNA"/>
</dbReference>
<dbReference type="RefSeq" id="WP_012157950.1">
    <property type="nucleotide sequence ID" value="NC_009922.1"/>
</dbReference>
<dbReference type="SMR" id="A8MEG4"/>
<dbReference type="STRING" id="350688.Clos_0065"/>
<dbReference type="KEGG" id="aoe:Clos_0065"/>
<dbReference type="eggNOG" id="COG0404">
    <property type="taxonomic scope" value="Bacteria"/>
</dbReference>
<dbReference type="HOGENOM" id="CLU_007884_10_2_9"/>
<dbReference type="OrthoDB" id="9774591at2"/>
<dbReference type="Proteomes" id="UP000000269">
    <property type="component" value="Chromosome"/>
</dbReference>
<dbReference type="GO" id="GO:0005829">
    <property type="term" value="C:cytosol"/>
    <property type="evidence" value="ECO:0007669"/>
    <property type="project" value="TreeGrafter"/>
</dbReference>
<dbReference type="GO" id="GO:0005960">
    <property type="term" value="C:glycine cleavage complex"/>
    <property type="evidence" value="ECO:0007669"/>
    <property type="project" value="InterPro"/>
</dbReference>
<dbReference type="GO" id="GO:0004047">
    <property type="term" value="F:aminomethyltransferase activity"/>
    <property type="evidence" value="ECO:0007669"/>
    <property type="project" value="UniProtKB-UniRule"/>
</dbReference>
<dbReference type="GO" id="GO:0008483">
    <property type="term" value="F:transaminase activity"/>
    <property type="evidence" value="ECO:0007669"/>
    <property type="project" value="UniProtKB-KW"/>
</dbReference>
<dbReference type="GO" id="GO:0019464">
    <property type="term" value="P:glycine decarboxylation via glycine cleavage system"/>
    <property type="evidence" value="ECO:0007669"/>
    <property type="project" value="UniProtKB-UniRule"/>
</dbReference>
<dbReference type="FunFam" id="2.40.30.110:FF:000003">
    <property type="entry name" value="Aminomethyltransferase"/>
    <property type="match status" value="1"/>
</dbReference>
<dbReference type="FunFam" id="3.30.70.1400:FF:000001">
    <property type="entry name" value="Aminomethyltransferase"/>
    <property type="match status" value="1"/>
</dbReference>
<dbReference type="FunFam" id="4.10.1250.10:FF:000001">
    <property type="entry name" value="Aminomethyltransferase"/>
    <property type="match status" value="1"/>
</dbReference>
<dbReference type="Gene3D" id="2.40.30.110">
    <property type="entry name" value="Aminomethyltransferase beta-barrel domains"/>
    <property type="match status" value="1"/>
</dbReference>
<dbReference type="Gene3D" id="3.30.70.1400">
    <property type="entry name" value="Aminomethyltransferase beta-barrel domains"/>
    <property type="match status" value="1"/>
</dbReference>
<dbReference type="Gene3D" id="4.10.1250.10">
    <property type="entry name" value="Aminomethyltransferase fragment"/>
    <property type="match status" value="1"/>
</dbReference>
<dbReference type="Gene3D" id="3.30.1360.120">
    <property type="entry name" value="Probable tRNA modification gtpase trme, domain 1"/>
    <property type="match status" value="1"/>
</dbReference>
<dbReference type="HAMAP" id="MF_00259">
    <property type="entry name" value="GcvT"/>
    <property type="match status" value="1"/>
</dbReference>
<dbReference type="InterPro" id="IPR006223">
    <property type="entry name" value="GCS_T"/>
</dbReference>
<dbReference type="InterPro" id="IPR022903">
    <property type="entry name" value="GCS_T_bac"/>
</dbReference>
<dbReference type="InterPro" id="IPR013977">
    <property type="entry name" value="GCST_C"/>
</dbReference>
<dbReference type="InterPro" id="IPR006222">
    <property type="entry name" value="GCV_T_N"/>
</dbReference>
<dbReference type="InterPro" id="IPR028896">
    <property type="entry name" value="GcvT/YgfZ/DmdA"/>
</dbReference>
<dbReference type="InterPro" id="IPR029043">
    <property type="entry name" value="GcvT/YgfZ_C"/>
</dbReference>
<dbReference type="InterPro" id="IPR027266">
    <property type="entry name" value="TrmE/GcvT_dom1"/>
</dbReference>
<dbReference type="NCBIfam" id="TIGR00528">
    <property type="entry name" value="gcvT"/>
    <property type="match status" value="1"/>
</dbReference>
<dbReference type="NCBIfam" id="NF001567">
    <property type="entry name" value="PRK00389.1"/>
    <property type="match status" value="1"/>
</dbReference>
<dbReference type="PANTHER" id="PTHR43757">
    <property type="entry name" value="AMINOMETHYLTRANSFERASE"/>
    <property type="match status" value="1"/>
</dbReference>
<dbReference type="PANTHER" id="PTHR43757:SF2">
    <property type="entry name" value="AMINOMETHYLTRANSFERASE, MITOCHONDRIAL"/>
    <property type="match status" value="1"/>
</dbReference>
<dbReference type="Pfam" id="PF01571">
    <property type="entry name" value="GCV_T"/>
    <property type="match status" value="1"/>
</dbReference>
<dbReference type="Pfam" id="PF08669">
    <property type="entry name" value="GCV_T_C"/>
    <property type="match status" value="1"/>
</dbReference>
<dbReference type="PIRSF" id="PIRSF006487">
    <property type="entry name" value="GcvT"/>
    <property type="match status" value="1"/>
</dbReference>
<dbReference type="SUPFAM" id="SSF101790">
    <property type="entry name" value="Aminomethyltransferase beta-barrel domain"/>
    <property type="match status" value="1"/>
</dbReference>
<dbReference type="SUPFAM" id="SSF103025">
    <property type="entry name" value="Folate-binding domain"/>
    <property type="match status" value="1"/>
</dbReference>
<reference key="1">
    <citation type="submission" date="2007-10" db="EMBL/GenBank/DDBJ databases">
        <title>Complete genome of Alkaliphilus oremlandii OhILAs.</title>
        <authorList>
            <person name="Copeland A."/>
            <person name="Lucas S."/>
            <person name="Lapidus A."/>
            <person name="Barry K."/>
            <person name="Detter J.C."/>
            <person name="Glavina del Rio T."/>
            <person name="Hammon N."/>
            <person name="Israni S."/>
            <person name="Dalin E."/>
            <person name="Tice H."/>
            <person name="Pitluck S."/>
            <person name="Chain P."/>
            <person name="Malfatti S."/>
            <person name="Shin M."/>
            <person name="Vergez L."/>
            <person name="Schmutz J."/>
            <person name="Larimer F."/>
            <person name="Land M."/>
            <person name="Hauser L."/>
            <person name="Kyrpides N."/>
            <person name="Mikhailova N."/>
            <person name="Stolz J.F."/>
            <person name="Dawson A."/>
            <person name="Fisher E."/>
            <person name="Crable B."/>
            <person name="Perera E."/>
            <person name="Lisak J."/>
            <person name="Ranganathan M."/>
            <person name="Basu P."/>
            <person name="Richardson P."/>
        </authorList>
    </citation>
    <scope>NUCLEOTIDE SEQUENCE [LARGE SCALE GENOMIC DNA]</scope>
    <source>
        <strain>OhILAs</strain>
    </source>
</reference>
<protein>
    <recommendedName>
        <fullName evidence="1">Aminomethyltransferase</fullName>
        <ecNumber evidence="1">2.1.2.10</ecNumber>
    </recommendedName>
    <alternativeName>
        <fullName evidence="1">Glycine cleavage system T protein</fullName>
    </alternativeName>
</protein>
<proteinExistence type="inferred from homology"/>
<keyword id="KW-0032">Aminotransferase</keyword>
<keyword id="KW-1185">Reference proteome</keyword>
<keyword id="KW-0808">Transferase</keyword>